<accession>A8GJW6</accession>
<gene>
    <name evidence="1" type="primary">rlmG</name>
    <name type="ordered locus">Spro_4312</name>
</gene>
<reference key="1">
    <citation type="submission" date="2007-09" db="EMBL/GenBank/DDBJ databases">
        <title>Complete sequence of chromosome of Serratia proteamaculans 568.</title>
        <authorList>
            <consortium name="US DOE Joint Genome Institute"/>
            <person name="Copeland A."/>
            <person name="Lucas S."/>
            <person name="Lapidus A."/>
            <person name="Barry K."/>
            <person name="Glavina del Rio T."/>
            <person name="Dalin E."/>
            <person name="Tice H."/>
            <person name="Pitluck S."/>
            <person name="Chain P."/>
            <person name="Malfatti S."/>
            <person name="Shin M."/>
            <person name="Vergez L."/>
            <person name="Schmutz J."/>
            <person name="Larimer F."/>
            <person name="Land M."/>
            <person name="Hauser L."/>
            <person name="Kyrpides N."/>
            <person name="Kim E."/>
            <person name="Taghavi S."/>
            <person name="Newman L."/>
            <person name="Vangronsveld J."/>
            <person name="van der Lelie D."/>
            <person name="Richardson P."/>
        </authorList>
    </citation>
    <scope>NUCLEOTIDE SEQUENCE [LARGE SCALE GENOMIC DNA]</scope>
    <source>
        <strain>568</strain>
    </source>
</reference>
<proteinExistence type="inferred from homology"/>
<comment type="function">
    <text evidence="1">Specifically methylates the guanine in position 1835 (m2G1835) of 23S rRNA.</text>
</comment>
<comment type="catalytic activity">
    <reaction evidence="1">
        <text>guanosine(1835) in 23S rRNA + S-adenosyl-L-methionine = N(2)-methylguanosine(1835) in 23S rRNA + S-adenosyl-L-homocysteine + H(+)</text>
        <dbReference type="Rhea" id="RHEA:42744"/>
        <dbReference type="Rhea" id="RHEA-COMP:10217"/>
        <dbReference type="Rhea" id="RHEA-COMP:10218"/>
        <dbReference type="ChEBI" id="CHEBI:15378"/>
        <dbReference type="ChEBI" id="CHEBI:57856"/>
        <dbReference type="ChEBI" id="CHEBI:59789"/>
        <dbReference type="ChEBI" id="CHEBI:74269"/>
        <dbReference type="ChEBI" id="CHEBI:74481"/>
        <dbReference type="EC" id="2.1.1.174"/>
    </reaction>
</comment>
<comment type="subcellular location">
    <subcellularLocation>
        <location evidence="1">Cytoplasm</location>
    </subcellularLocation>
</comment>
<comment type="similarity">
    <text evidence="1">Belongs to the methyltransferase superfamily. RlmG family.</text>
</comment>
<evidence type="ECO:0000255" key="1">
    <source>
        <dbReference type="HAMAP-Rule" id="MF_01859"/>
    </source>
</evidence>
<protein>
    <recommendedName>
        <fullName evidence="1">Ribosomal RNA large subunit methyltransferase G</fullName>
        <ecNumber evidence="1">2.1.1.174</ecNumber>
    </recommendedName>
    <alternativeName>
        <fullName evidence="1">23S rRNA m2G1835 methyltransferase</fullName>
    </alternativeName>
    <alternativeName>
        <fullName evidence="1">rRNA (guanine-N(2)-)-methyltransferase RlmG</fullName>
    </alternativeName>
</protein>
<organism>
    <name type="scientific">Serratia proteamaculans (strain 568)</name>
    <dbReference type="NCBI Taxonomy" id="399741"/>
    <lineage>
        <taxon>Bacteria</taxon>
        <taxon>Pseudomonadati</taxon>
        <taxon>Pseudomonadota</taxon>
        <taxon>Gammaproteobacteria</taxon>
        <taxon>Enterobacterales</taxon>
        <taxon>Yersiniaceae</taxon>
        <taxon>Serratia</taxon>
    </lineage>
</organism>
<keyword id="KW-0963">Cytoplasm</keyword>
<keyword id="KW-0489">Methyltransferase</keyword>
<keyword id="KW-0698">rRNA processing</keyword>
<keyword id="KW-0949">S-adenosyl-L-methionine</keyword>
<keyword id="KW-0808">Transferase</keyword>
<feature type="chain" id="PRO_0000366503" description="Ribosomal RNA large subunit methyltransferase G">
    <location>
        <begin position="1"/>
        <end position="379"/>
    </location>
</feature>
<name>RLMG_SERP5</name>
<sequence length="379" mass="42282">MSQLDLGTQQLELERYPQQEESTQLQAWEAADEYLLQQLENVNIGDRPVLIFNDNFGTLACALHSHQPYSISDSYMSQLATRHNLKLNELDPQQVTLLDTLAELPASPAVVLIRIPKALALLEQQLRALRDVVAPDTVIIAGAKARDVHTSTMQLFEKVLGPTRTSLAWKKARLIHCEVADIVPPAAPVTTNWVLDGTDWVIHNHANVFSRSNLDIGARLFLDHLPHDIEGHIIDLGCGNGVIGMAALMQNPQAQVSFVDESYMAVASSELNVEHNLPQDMDRCQFEVNNSLAGIERESVQAVLCNPPFHQQHAITDHTAWQMFCDAKRCLQVGGELRIVGNRHLDYHQKLKRLFGNCTLIASNKKFVILKAVKSGARY</sequence>
<dbReference type="EC" id="2.1.1.174" evidence="1"/>
<dbReference type="EMBL" id="CP000826">
    <property type="protein sequence ID" value="ABV43406.1"/>
    <property type="molecule type" value="Genomic_DNA"/>
</dbReference>
<dbReference type="SMR" id="A8GJW6"/>
<dbReference type="STRING" id="399741.Spro_4312"/>
<dbReference type="KEGG" id="spe:Spro_4312"/>
<dbReference type="eggNOG" id="COG2813">
    <property type="taxonomic scope" value="Bacteria"/>
</dbReference>
<dbReference type="HOGENOM" id="CLU_040288_4_0_6"/>
<dbReference type="OrthoDB" id="29650at2"/>
<dbReference type="GO" id="GO:0005737">
    <property type="term" value="C:cytoplasm"/>
    <property type="evidence" value="ECO:0007669"/>
    <property type="project" value="UniProtKB-SubCell"/>
</dbReference>
<dbReference type="GO" id="GO:0052916">
    <property type="term" value="F:23S rRNA (guanine(1835)-N(2))-methyltransferase activity"/>
    <property type="evidence" value="ECO:0007669"/>
    <property type="project" value="UniProtKB-EC"/>
</dbReference>
<dbReference type="GO" id="GO:0003676">
    <property type="term" value="F:nucleic acid binding"/>
    <property type="evidence" value="ECO:0007669"/>
    <property type="project" value="InterPro"/>
</dbReference>
<dbReference type="CDD" id="cd02440">
    <property type="entry name" value="AdoMet_MTases"/>
    <property type="match status" value="1"/>
</dbReference>
<dbReference type="FunFam" id="3.40.50.150:FF:000046">
    <property type="entry name" value="Ribosomal RNA large subunit methyltransferase G"/>
    <property type="match status" value="1"/>
</dbReference>
<dbReference type="Gene3D" id="3.40.50.150">
    <property type="entry name" value="Vaccinia Virus protein VP39"/>
    <property type="match status" value="2"/>
</dbReference>
<dbReference type="HAMAP" id="MF_01859">
    <property type="entry name" value="23SrRNA_methyltr_G"/>
    <property type="match status" value="1"/>
</dbReference>
<dbReference type="InterPro" id="IPR002052">
    <property type="entry name" value="DNA_methylase_N6_adenine_CS"/>
</dbReference>
<dbReference type="InterPro" id="IPR017237">
    <property type="entry name" value="rRNA_m2G-MeTrfase_RlmG"/>
</dbReference>
<dbReference type="InterPro" id="IPR046977">
    <property type="entry name" value="RsmC/RlmG"/>
</dbReference>
<dbReference type="InterPro" id="IPR029063">
    <property type="entry name" value="SAM-dependent_MTases_sf"/>
</dbReference>
<dbReference type="InterPro" id="IPR007848">
    <property type="entry name" value="Small_mtfrase_dom"/>
</dbReference>
<dbReference type="NCBIfam" id="NF011577">
    <property type="entry name" value="PRK15001.1"/>
    <property type="match status" value="1"/>
</dbReference>
<dbReference type="PANTHER" id="PTHR47816:SF5">
    <property type="entry name" value="RIBOSOMAL RNA LARGE SUBUNIT METHYLTRANSFERASE G"/>
    <property type="match status" value="1"/>
</dbReference>
<dbReference type="PANTHER" id="PTHR47816">
    <property type="entry name" value="RIBOSOMAL RNA SMALL SUBUNIT METHYLTRANSFERASE C"/>
    <property type="match status" value="1"/>
</dbReference>
<dbReference type="Pfam" id="PF05175">
    <property type="entry name" value="MTS"/>
    <property type="match status" value="1"/>
</dbReference>
<dbReference type="PIRSF" id="PIRSF037565">
    <property type="entry name" value="RRNA_m2G_Mtase_RsmD_prd"/>
    <property type="match status" value="1"/>
</dbReference>
<dbReference type="SUPFAM" id="SSF53335">
    <property type="entry name" value="S-adenosyl-L-methionine-dependent methyltransferases"/>
    <property type="match status" value="1"/>
</dbReference>